<accession>A6W384</accession>
<comment type="similarity">
    <text evidence="1">Belongs to the universal ribosomal protein uL29 family.</text>
</comment>
<dbReference type="EMBL" id="CP000749">
    <property type="protein sequence ID" value="ABR73163.1"/>
    <property type="molecule type" value="Genomic_DNA"/>
</dbReference>
<dbReference type="SMR" id="A6W384"/>
<dbReference type="STRING" id="400668.Mmwyl1_4268"/>
<dbReference type="KEGG" id="mmw:Mmwyl1_4268"/>
<dbReference type="eggNOG" id="COG0255">
    <property type="taxonomic scope" value="Bacteria"/>
</dbReference>
<dbReference type="HOGENOM" id="CLU_158491_1_2_6"/>
<dbReference type="OrthoDB" id="9815192at2"/>
<dbReference type="GO" id="GO:0022625">
    <property type="term" value="C:cytosolic large ribosomal subunit"/>
    <property type="evidence" value="ECO:0007669"/>
    <property type="project" value="TreeGrafter"/>
</dbReference>
<dbReference type="GO" id="GO:0003735">
    <property type="term" value="F:structural constituent of ribosome"/>
    <property type="evidence" value="ECO:0007669"/>
    <property type="project" value="InterPro"/>
</dbReference>
<dbReference type="GO" id="GO:0006412">
    <property type="term" value="P:translation"/>
    <property type="evidence" value="ECO:0007669"/>
    <property type="project" value="UniProtKB-UniRule"/>
</dbReference>
<dbReference type="CDD" id="cd00427">
    <property type="entry name" value="Ribosomal_L29_HIP"/>
    <property type="match status" value="1"/>
</dbReference>
<dbReference type="FunFam" id="1.10.287.310:FF:000001">
    <property type="entry name" value="50S ribosomal protein L29"/>
    <property type="match status" value="1"/>
</dbReference>
<dbReference type="Gene3D" id="6.10.140.1970">
    <property type="match status" value="1"/>
</dbReference>
<dbReference type="HAMAP" id="MF_00374">
    <property type="entry name" value="Ribosomal_uL29"/>
    <property type="match status" value="1"/>
</dbReference>
<dbReference type="InterPro" id="IPR050063">
    <property type="entry name" value="Ribosomal_protein_uL29"/>
</dbReference>
<dbReference type="InterPro" id="IPR001854">
    <property type="entry name" value="Ribosomal_uL29"/>
</dbReference>
<dbReference type="InterPro" id="IPR018254">
    <property type="entry name" value="Ribosomal_uL29_CS"/>
</dbReference>
<dbReference type="InterPro" id="IPR036049">
    <property type="entry name" value="Ribosomal_uL29_sf"/>
</dbReference>
<dbReference type="NCBIfam" id="TIGR00012">
    <property type="entry name" value="L29"/>
    <property type="match status" value="1"/>
</dbReference>
<dbReference type="PANTHER" id="PTHR10916">
    <property type="entry name" value="60S RIBOSOMAL PROTEIN L35/50S RIBOSOMAL PROTEIN L29"/>
    <property type="match status" value="1"/>
</dbReference>
<dbReference type="PANTHER" id="PTHR10916:SF0">
    <property type="entry name" value="LARGE RIBOSOMAL SUBUNIT PROTEIN UL29C"/>
    <property type="match status" value="1"/>
</dbReference>
<dbReference type="Pfam" id="PF00831">
    <property type="entry name" value="Ribosomal_L29"/>
    <property type="match status" value="1"/>
</dbReference>
<dbReference type="SUPFAM" id="SSF46561">
    <property type="entry name" value="Ribosomal protein L29 (L29p)"/>
    <property type="match status" value="1"/>
</dbReference>
<dbReference type="PROSITE" id="PS00579">
    <property type="entry name" value="RIBOSOMAL_L29"/>
    <property type="match status" value="1"/>
</dbReference>
<gene>
    <name evidence="1" type="primary">rpmC</name>
    <name type="ordered locus">Mmwyl1_4268</name>
</gene>
<sequence>MKAKEMQEKSVAELQATLIELLREQFTLRMQKATGQLAQTHLLSQVRRNIARVKTVLNDKAGN</sequence>
<evidence type="ECO:0000255" key="1">
    <source>
        <dbReference type="HAMAP-Rule" id="MF_00374"/>
    </source>
</evidence>
<evidence type="ECO:0000305" key="2"/>
<feature type="chain" id="PRO_1000079890" description="Large ribosomal subunit protein uL29">
    <location>
        <begin position="1"/>
        <end position="63"/>
    </location>
</feature>
<keyword id="KW-0687">Ribonucleoprotein</keyword>
<keyword id="KW-0689">Ribosomal protein</keyword>
<organism>
    <name type="scientific">Marinomonas sp. (strain MWYL1)</name>
    <dbReference type="NCBI Taxonomy" id="400668"/>
    <lineage>
        <taxon>Bacteria</taxon>
        <taxon>Pseudomonadati</taxon>
        <taxon>Pseudomonadota</taxon>
        <taxon>Gammaproteobacteria</taxon>
        <taxon>Oceanospirillales</taxon>
        <taxon>Oceanospirillaceae</taxon>
        <taxon>Marinomonas</taxon>
    </lineage>
</organism>
<reference key="1">
    <citation type="submission" date="2007-06" db="EMBL/GenBank/DDBJ databases">
        <title>Complete sequence of Marinomonas sp. MWYL1.</title>
        <authorList>
            <consortium name="US DOE Joint Genome Institute"/>
            <person name="Copeland A."/>
            <person name="Lucas S."/>
            <person name="Lapidus A."/>
            <person name="Barry K."/>
            <person name="Glavina del Rio T."/>
            <person name="Dalin E."/>
            <person name="Tice H."/>
            <person name="Pitluck S."/>
            <person name="Kiss H."/>
            <person name="Brettin T."/>
            <person name="Bruce D."/>
            <person name="Detter J.C."/>
            <person name="Han C."/>
            <person name="Schmutz J."/>
            <person name="Larimer F."/>
            <person name="Land M."/>
            <person name="Hauser L."/>
            <person name="Kyrpides N."/>
            <person name="Kim E."/>
            <person name="Johnston A.W.B."/>
            <person name="Todd J.D."/>
            <person name="Rogers R."/>
            <person name="Wexler M."/>
            <person name="Bond P.L."/>
            <person name="Li Y."/>
            <person name="Richardson P."/>
        </authorList>
    </citation>
    <scope>NUCLEOTIDE SEQUENCE [LARGE SCALE GENOMIC DNA]</scope>
    <source>
        <strain>MWYL1</strain>
    </source>
</reference>
<protein>
    <recommendedName>
        <fullName evidence="1">Large ribosomal subunit protein uL29</fullName>
    </recommendedName>
    <alternativeName>
        <fullName evidence="2">50S ribosomal protein L29</fullName>
    </alternativeName>
</protein>
<proteinExistence type="inferred from homology"/>
<name>RL29_MARMS</name>